<sequence length="367" mass="41198">MLSAGIVGLPNVGKSTLFSAITNLQVEIANYPFATIEPNTGIVNVSDERLDKLASLINPEKIVYTTFRFVDIAGLVKGASQGQGLGNQFLANIREVDLICHVVRCFQDKKIVHVNNTIDPVFDFEIIVNELIQADFELITNRIGKLKRKAESGDKIAKEEFVLLEIVLNGLKQGQMPIQTLSESELKTIKSLNLLTAKPILIVANVSENDLLNLDNNEALKKLNAFLDQKKIPKAITVCSLIEKELSGLKLEQRQYFLDELGLKNYSGLNRVIQAAYQTLNLWSFFTFGKKEVRAWTFKKGWNAPQCAGQIHSDFEKGFIKVEVISWDQLFAMKSLQEAKKQGLIRLEGKNYLIKDGDVCNFKFNVT</sequence>
<feature type="chain" id="PRO_0000122458" description="Ribosome-binding ATPase YchF">
    <location>
        <begin position="1"/>
        <end position="367"/>
    </location>
</feature>
<feature type="domain" description="OBG-type G">
    <location>
        <begin position="2"/>
        <end position="258"/>
    </location>
</feature>
<feature type="domain" description="TGS" evidence="3">
    <location>
        <begin position="281"/>
        <end position="364"/>
    </location>
</feature>
<feature type="binding site" evidence="2">
    <location>
        <begin position="11"/>
        <end position="16"/>
    </location>
    <ligand>
        <name>ATP</name>
        <dbReference type="ChEBI" id="CHEBI:30616"/>
    </ligand>
</feature>
<feature type="binding site" evidence="1">
    <location>
        <position position="15"/>
    </location>
    <ligand>
        <name>Mg(2+)</name>
        <dbReference type="ChEBI" id="CHEBI:18420"/>
    </ligand>
</feature>
<feature type="binding site" evidence="1">
    <location>
        <position position="35"/>
    </location>
    <ligand>
        <name>Mg(2+)</name>
        <dbReference type="ChEBI" id="CHEBI:18420"/>
    </ligand>
</feature>
<comment type="function">
    <text evidence="2">ATPase that binds to both the 70S ribosome and the 50S ribosomal subunit in a nucleotide-independent manner.</text>
</comment>
<comment type="cofactor">
    <cofactor evidence="1">
        <name>Mg(2+)</name>
        <dbReference type="ChEBI" id="CHEBI:18420"/>
    </cofactor>
</comment>
<comment type="similarity">
    <text evidence="2">Belongs to the TRAFAC class OBG-HflX-like GTPase superfamily. OBG GTPase family. YchF/OLA1 subfamily.</text>
</comment>
<gene>
    <name evidence="2" type="primary">ychF</name>
    <name type="ordered locus">MG024</name>
</gene>
<proteinExistence type="inferred from homology"/>
<evidence type="ECO:0000250" key="1"/>
<evidence type="ECO:0000255" key="2">
    <source>
        <dbReference type="HAMAP-Rule" id="MF_00944"/>
    </source>
</evidence>
<evidence type="ECO:0000255" key="3">
    <source>
        <dbReference type="PROSITE-ProRule" id="PRU01228"/>
    </source>
</evidence>
<reference key="1">
    <citation type="journal article" date="1995" name="Science">
        <title>The minimal gene complement of Mycoplasma genitalium.</title>
        <authorList>
            <person name="Fraser C.M."/>
            <person name="Gocayne J.D."/>
            <person name="White O."/>
            <person name="Adams M.D."/>
            <person name="Clayton R.A."/>
            <person name="Fleischmann R.D."/>
            <person name="Bult C.J."/>
            <person name="Kerlavage A.R."/>
            <person name="Sutton G.G."/>
            <person name="Kelley J.M."/>
            <person name="Fritchman J.L."/>
            <person name="Weidman J.F."/>
            <person name="Small K.V."/>
            <person name="Sandusky M."/>
            <person name="Fuhrmann J.L."/>
            <person name="Nguyen D.T."/>
            <person name="Utterback T.R."/>
            <person name="Saudek D.M."/>
            <person name="Phillips C.A."/>
            <person name="Merrick J.M."/>
            <person name="Tomb J.-F."/>
            <person name="Dougherty B.A."/>
            <person name="Bott K.F."/>
            <person name="Hu P.-C."/>
            <person name="Lucier T.S."/>
            <person name="Peterson S.N."/>
            <person name="Smith H.O."/>
            <person name="Hutchison C.A. III"/>
            <person name="Venter J.C."/>
        </authorList>
    </citation>
    <scope>NUCLEOTIDE SEQUENCE [LARGE SCALE GENOMIC DNA]</scope>
    <source>
        <strain>ATCC 33530 / DSM 19775 / NCTC 10195 / G37</strain>
    </source>
</reference>
<keyword id="KW-0067">ATP-binding</keyword>
<keyword id="KW-0460">Magnesium</keyword>
<keyword id="KW-0479">Metal-binding</keyword>
<keyword id="KW-0547">Nucleotide-binding</keyword>
<keyword id="KW-1185">Reference proteome</keyword>
<dbReference type="EMBL" id="L43967">
    <property type="protein sequence ID" value="AAC71240.1"/>
    <property type="molecule type" value="Genomic_DNA"/>
</dbReference>
<dbReference type="PIR" id="F64202">
    <property type="entry name" value="F64202"/>
</dbReference>
<dbReference type="RefSeq" id="WP_009885916.1">
    <property type="nucleotide sequence ID" value="NC_000908.2"/>
</dbReference>
<dbReference type="SMR" id="P47270"/>
<dbReference type="FunCoup" id="P47270">
    <property type="interactions" value="183"/>
</dbReference>
<dbReference type="STRING" id="243273.MG_024"/>
<dbReference type="GeneID" id="88282139"/>
<dbReference type="KEGG" id="mge:MG_024"/>
<dbReference type="eggNOG" id="COG0012">
    <property type="taxonomic scope" value="Bacteria"/>
</dbReference>
<dbReference type="HOGENOM" id="CLU_018395_0_1_14"/>
<dbReference type="InParanoid" id="P47270"/>
<dbReference type="OrthoDB" id="9807318at2"/>
<dbReference type="BioCyc" id="MGEN243273:G1GJ2-24-MONOMER"/>
<dbReference type="Proteomes" id="UP000000807">
    <property type="component" value="Chromosome"/>
</dbReference>
<dbReference type="GO" id="GO:0005737">
    <property type="term" value="C:cytoplasm"/>
    <property type="evidence" value="ECO:0000318"/>
    <property type="project" value="GO_Central"/>
</dbReference>
<dbReference type="GO" id="GO:0005524">
    <property type="term" value="F:ATP binding"/>
    <property type="evidence" value="ECO:0007669"/>
    <property type="project" value="UniProtKB-UniRule"/>
</dbReference>
<dbReference type="GO" id="GO:0016887">
    <property type="term" value="F:ATP hydrolysis activity"/>
    <property type="evidence" value="ECO:0000318"/>
    <property type="project" value="GO_Central"/>
</dbReference>
<dbReference type="GO" id="GO:0005525">
    <property type="term" value="F:GTP binding"/>
    <property type="evidence" value="ECO:0007669"/>
    <property type="project" value="InterPro"/>
</dbReference>
<dbReference type="GO" id="GO:0046872">
    <property type="term" value="F:metal ion binding"/>
    <property type="evidence" value="ECO:0007669"/>
    <property type="project" value="UniProtKB-KW"/>
</dbReference>
<dbReference type="GO" id="GO:0043023">
    <property type="term" value="F:ribosomal large subunit binding"/>
    <property type="evidence" value="ECO:0007669"/>
    <property type="project" value="UniProtKB-UniRule"/>
</dbReference>
<dbReference type="CDD" id="cd04867">
    <property type="entry name" value="TGS_YchF_OLA1"/>
    <property type="match status" value="1"/>
</dbReference>
<dbReference type="CDD" id="cd01900">
    <property type="entry name" value="YchF"/>
    <property type="match status" value="1"/>
</dbReference>
<dbReference type="FunFam" id="1.10.150.300:FF:000001">
    <property type="entry name" value="Ribosome-binding ATPase YchF"/>
    <property type="match status" value="1"/>
</dbReference>
<dbReference type="FunFam" id="3.10.20.30:FF:000001">
    <property type="entry name" value="Ribosome-binding ATPase YchF"/>
    <property type="match status" value="1"/>
</dbReference>
<dbReference type="Gene3D" id="3.10.20.30">
    <property type="match status" value="1"/>
</dbReference>
<dbReference type="Gene3D" id="3.40.50.300">
    <property type="entry name" value="P-loop containing nucleotide triphosphate hydrolases"/>
    <property type="match status" value="1"/>
</dbReference>
<dbReference type="Gene3D" id="1.10.150.300">
    <property type="entry name" value="TGS-like domain"/>
    <property type="match status" value="1"/>
</dbReference>
<dbReference type="HAMAP" id="MF_00944">
    <property type="entry name" value="YchF_OLA1_ATPase"/>
    <property type="match status" value="1"/>
</dbReference>
<dbReference type="InterPro" id="IPR004396">
    <property type="entry name" value="ATPase_YchF/OLA1"/>
</dbReference>
<dbReference type="InterPro" id="IPR012675">
    <property type="entry name" value="Beta-grasp_dom_sf"/>
</dbReference>
<dbReference type="InterPro" id="IPR031167">
    <property type="entry name" value="G_OBG"/>
</dbReference>
<dbReference type="InterPro" id="IPR006073">
    <property type="entry name" value="GTP-bd"/>
</dbReference>
<dbReference type="InterPro" id="IPR027417">
    <property type="entry name" value="P-loop_NTPase"/>
</dbReference>
<dbReference type="InterPro" id="IPR004095">
    <property type="entry name" value="TGS"/>
</dbReference>
<dbReference type="InterPro" id="IPR012676">
    <property type="entry name" value="TGS-like"/>
</dbReference>
<dbReference type="InterPro" id="IPR023192">
    <property type="entry name" value="TGS-like_dom_sf"/>
</dbReference>
<dbReference type="InterPro" id="IPR013029">
    <property type="entry name" value="YchF_C"/>
</dbReference>
<dbReference type="InterPro" id="IPR041706">
    <property type="entry name" value="YchF_N"/>
</dbReference>
<dbReference type="NCBIfam" id="TIGR00092">
    <property type="entry name" value="redox-regulated ATPase YchF"/>
    <property type="match status" value="1"/>
</dbReference>
<dbReference type="PANTHER" id="PTHR23305">
    <property type="entry name" value="OBG GTPASE FAMILY"/>
    <property type="match status" value="1"/>
</dbReference>
<dbReference type="PANTHER" id="PTHR23305:SF18">
    <property type="entry name" value="OBG-TYPE G DOMAIN-CONTAINING PROTEIN"/>
    <property type="match status" value="1"/>
</dbReference>
<dbReference type="Pfam" id="PF01926">
    <property type="entry name" value="MMR_HSR1"/>
    <property type="match status" value="1"/>
</dbReference>
<dbReference type="Pfam" id="PF06071">
    <property type="entry name" value="YchF-GTPase_C"/>
    <property type="match status" value="1"/>
</dbReference>
<dbReference type="PIRSF" id="PIRSF006641">
    <property type="entry name" value="CHP00092"/>
    <property type="match status" value="1"/>
</dbReference>
<dbReference type="PRINTS" id="PR00326">
    <property type="entry name" value="GTP1OBG"/>
</dbReference>
<dbReference type="SUPFAM" id="SSF52540">
    <property type="entry name" value="P-loop containing nucleoside triphosphate hydrolases"/>
    <property type="match status" value="1"/>
</dbReference>
<dbReference type="SUPFAM" id="SSF81271">
    <property type="entry name" value="TGS-like"/>
    <property type="match status" value="1"/>
</dbReference>
<dbReference type="PROSITE" id="PS51710">
    <property type="entry name" value="G_OBG"/>
    <property type="match status" value="1"/>
</dbReference>
<dbReference type="PROSITE" id="PS51880">
    <property type="entry name" value="TGS"/>
    <property type="match status" value="1"/>
</dbReference>
<name>YCHF_MYCGE</name>
<accession>P47270</accession>
<protein>
    <recommendedName>
        <fullName evidence="2">Ribosome-binding ATPase YchF</fullName>
    </recommendedName>
</protein>
<organism>
    <name type="scientific">Mycoplasma genitalium (strain ATCC 33530 / DSM 19775 / NCTC 10195 / G37)</name>
    <name type="common">Mycoplasmoides genitalium</name>
    <dbReference type="NCBI Taxonomy" id="243273"/>
    <lineage>
        <taxon>Bacteria</taxon>
        <taxon>Bacillati</taxon>
        <taxon>Mycoplasmatota</taxon>
        <taxon>Mycoplasmoidales</taxon>
        <taxon>Mycoplasmoidaceae</taxon>
        <taxon>Mycoplasmoides</taxon>
    </lineage>
</organism>